<sequence>MLRDTLKKAEKAREKKALYGEDIDLEKFIKEEAGEHEEVTRAKEVPKEVQETLLRVGVDPEERERAGTFIQVDQSGICTTCASESIEIMGMNVALDKYSWLKDYMWKAVAVDTDKYTATTALREAEGEMGGYFIRSKPGAREVFPLQACMFIGDERVMQTAHNIVIAEENSELHIITGCATGEDVSSALHVGVSEFYLKKGARITFTMVHNWAEQVEVRPRTGIMVGDDATYINNYILTSPVKSIQSYPTAYCTGENSRVVFQSILGGQKDSVLDMGSRVILEGRGSSAEMVSRAVSKDSSQIYSRGHLAGRVPEVKGHLECHGLVLSDDSMIYAVPELEGSATELEMSHEAAVGKIAEEEVMYLTSRGLTEEEAASMIVRGFLSMDITGLPPELAAETKRMLDMSLKGM</sequence>
<organism>
    <name type="scientific">Methanothermobacter thermautotrophicus (strain ATCC 29096 / DSM 1053 / JCM 10044 / NBRC 100330 / Delta H)</name>
    <name type="common">Methanobacterium thermoautotrophicum</name>
    <dbReference type="NCBI Taxonomy" id="187420"/>
    <lineage>
        <taxon>Archaea</taxon>
        <taxon>Methanobacteriati</taxon>
        <taxon>Methanobacteriota</taxon>
        <taxon>Methanomada group</taxon>
        <taxon>Methanobacteria</taxon>
        <taxon>Methanobacteriales</taxon>
        <taxon>Methanobacteriaceae</taxon>
        <taxon>Methanothermobacter</taxon>
    </lineage>
</organism>
<dbReference type="EMBL" id="AE000666">
    <property type="protein sequence ID" value="AAB85639.1"/>
    <property type="molecule type" value="Genomic_DNA"/>
</dbReference>
<dbReference type="PIR" id="C69020">
    <property type="entry name" value="C69020"/>
</dbReference>
<dbReference type="RefSeq" id="WP_010876774.1">
    <property type="nucleotide sequence ID" value="NC_000916.1"/>
</dbReference>
<dbReference type="SMR" id="O27218"/>
<dbReference type="FunCoup" id="O27218">
    <property type="interactions" value="3"/>
</dbReference>
<dbReference type="STRING" id="187420.MTH_1150"/>
<dbReference type="PaxDb" id="187420-MTH_1150"/>
<dbReference type="EnsemblBacteria" id="AAB85639">
    <property type="protein sequence ID" value="AAB85639"/>
    <property type="gene ID" value="MTH_1150"/>
</dbReference>
<dbReference type="GeneID" id="1471558"/>
<dbReference type="KEGG" id="mth:MTH_1150"/>
<dbReference type="PATRIC" id="fig|187420.15.peg.1127"/>
<dbReference type="HOGENOM" id="CLU_026231_0_1_2"/>
<dbReference type="InParanoid" id="O27218"/>
<dbReference type="Proteomes" id="UP000005223">
    <property type="component" value="Chromosome"/>
</dbReference>
<dbReference type="GO" id="GO:0016226">
    <property type="term" value="P:iron-sulfur cluster assembly"/>
    <property type="evidence" value="ECO:0007669"/>
    <property type="project" value="InterPro"/>
</dbReference>
<dbReference type="InterPro" id="IPR055346">
    <property type="entry name" value="Fe-S_cluster_assembly_SufBD"/>
</dbReference>
<dbReference type="InterPro" id="IPR000825">
    <property type="entry name" value="SUF_FeS_clus_asmbl_SufBD_core"/>
</dbReference>
<dbReference type="InterPro" id="IPR037284">
    <property type="entry name" value="SUF_FeS_clus_asmbl_SufBD_sf"/>
</dbReference>
<dbReference type="PANTHER" id="PTHR30508">
    <property type="entry name" value="FES CLUSTER ASSEMBLY PROTEIN SUF"/>
    <property type="match status" value="1"/>
</dbReference>
<dbReference type="PANTHER" id="PTHR30508:SF1">
    <property type="entry name" value="UPF0051 PROTEIN ABCI8, CHLOROPLASTIC-RELATED"/>
    <property type="match status" value="1"/>
</dbReference>
<dbReference type="Pfam" id="PF01458">
    <property type="entry name" value="SUFBD_core"/>
    <property type="match status" value="1"/>
</dbReference>
<dbReference type="SUPFAM" id="SSF101960">
    <property type="entry name" value="Stabilizer of iron transporter SufD"/>
    <property type="match status" value="1"/>
</dbReference>
<proteinExistence type="inferred from homology"/>
<protein>
    <recommendedName>
        <fullName>Iron-sulfur cluster assembly SufBD family protein MTH_1150</fullName>
    </recommendedName>
</protein>
<reference key="1">
    <citation type="journal article" date="1997" name="J. Bacteriol.">
        <title>Complete genome sequence of Methanobacterium thermoautotrophicum deltaH: functional analysis and comparative genomics.</title>
        <authorList>
            <person name="Smith D.R."/>
            <person name="Doucette-Stamm L.A."/>
            <person name="Deloughery C."/>
            <person name="Lee H.-M."/>
            <person name="Dubois J."/>
            <person name="Aldredge T."/>
            <person name="Bashirzadeh R."/>
            <person name="Blakely D."/>
            <person name="Cook R."/>
            <person name="Gilbert K."/>
            <person name="Harrison D."/>
            <person name="Hoang L."/>
            <person name="Keagle P."/>
            <person name="Lumm W."/>
            <person name="Pothier B."/>
            <person name="Qiu D."/>
            <person name="Spadafora R."/>
            <person name="Vicare R."/>
            <person name="Wang Y."/>
            <person name="Wierzbowski J."/>
            <person name="Gibson R."/>
            <person name="Jiwani N."/>
            <person name="Caruso A."/>
            <person name="Bush D."/>
            <person name="Safer H."/>
            <person name="Patwell D."/>
            <person name="Prabhakar S."/>
            <person name="McDougall S."/>
            <person name="Shimer G."/>
            <person name="Goyal A."/>
            <person name="Pietrovski S."/>
            <person name="Church G.M."/>
            <person name="Daniels C.J."/>
            <person name="Mao J.-I."/>
            <person name="Rice P."/>
            <person name="Noelling J."/>
            <person name="Reeve J.N."/>
        </authorList>
    </citation>
    <scope>NUCLEOTIDE SEQUENCE [LARGE SCALE GENOMIC DNA]</scope>
    <source>
        <strain>ATCC 29096 / DSM 1053 / JCM 10044 / NBRC 100330 / Delta H</strain>
    </source>
</reference>
<keyword id="KW-1185">Reference proteome</keyword>
<accession>O27218</accession>
<name>Y1150_METTH</name>
<feature type="chain" id="PRO_0000147380" description="Iron-sulfur cluster assembly SufBD family protein MTH_1150">
    <location>
        <begin position="1"/>
        <end position="410"/>
    </location>
</feature>
<gene>
    <name type="ordered locus">MTH_1150</name>
</gene>
<evidence type="ECO:0000305" key="1"/>
<comment type="similarity">
    <text evidence="1">Belongs to the iron-sulfur cluster assembly SufBD family.</text>
</comment>